<proteinExistence type="inferred from homology"/>
<sequence>MKVAVLGAAGGIGQALALLLKTQLPSGSELSLYDIAPVTPGVAVDLSHIPTAVKIKGFSGEDATPALEGADVVLISAGVARKPGMDRSDLFNVNAGIVKNLVQQVAKTCPKACIGIITNPVNTTVAIAAEVLKKAGVYDKNKLFGVTTLDIIRSNTFVAELKGKQPGEVEVPVIGGHSGVTILPLLSQVPGVSFTEQEVADLTKRIQNAGTEVVEAKAGGGSATLSMGQAAARFGLSLVRALQGEQGVVECAYVEGDGQYARFFSQPLLLGKNGVEERKSIGTLSAFEQNALEGMLDTLKKDIALGEEFVNK</sequence>
<keyword id="KW-0520">NAD</keyword>
<keyword id="KW-0560">Oxidoreductase</keyword>
<keyword id="KW-0816">Tricarboxylic acid cycle</keyword>
<gene>
    <name evidence="1" type="primary">mdh</name>
    <name type="ordered locus">ECDH10B_3413</name>
</gene>
<organism>
    <name type="scientific">Escherichia coli (strain K12 / DH10B)</name>
    <dbReference type="NCBI Taxonomy" id="316385"/>
    <lineage>
        <taxon>Bacteria</taxon>
        <taxon>Pseudomonadati</taxon>
        <taxon>Pseudomonadota</taxon>
        <taxon>Gammaproteobacteria</taxon>
        <taxon>Enterobacterales</taxon>
        <taxon>Enterobacteriaceae</taxon>
        <taxon>Escherichia</taxon>
    </lineage>
</organism>
<comment type="function">
    <text evidence="1">Catalyzes the reversible oxidation of malate to oxaloacetate.</text>
</comment>
<comment type="catalytic activity">
    <reaction evidence="1">
        <text>(S)-malate + NAD(+) = oxaloacetate + NADH + H(+)</text>
        <dbReference type="Rhea" id="RHEA:21432"/>
        <dbReference type="ChEBI" id="CHEBI:15378"/>
        <dbReference type="ChEBI" id="CHEBI:15589"/>
        <dbReference type="ChEBI" id="CHEBI:16452"/>
        <dbReference type="ChEBI" id="CHEBI:57540"/>
        <dbReference type="ChEBI" id="CHEBI:57945"/>
        <dbReference type="EC" id="1.1.1.37"/>
    </reaction>
</comment>
<comment type="subunit">
    <text evidence="1">Homodimer.</text>
</comment>
<comment type="similarity">
    <text evidence="1">Belongs to the LDH/MDH superfamily. MDH type 1 family.</text>
</comment>
<reference key="1">
    <citation type="journal article" date="2008" name="J. Bacteriol.">
        <title>The complete genome sequence of Escherichia coli DH10B: insights into the biology of a laboratory workhorse.</title>
        <authorList>
            <person name="Durfee T."/>
            <person name="Nelson R."/>
            <person name="Baldwin S."/>
            <person name="Plunkett G. III"/>
            <person name="Burland V."/>
            <person name="Mau B."/>
            <person name="Petrosino J.F."/>
            <person name="Qin X."/>
            <person name="Muzny D.M."/>
            <person name="Ayele M."/>
            <person name="Gibbs R.A."/>
            <person name="Csorgo B."/>
            <person name="Posfai G."/>
            <person name="Weinstock G.M."/>
            <person name="Blattner F.R."/>
        </authorList>
    </citation>
    <scope>NUCLEOTIDE SEQUENCE [LARGE SCALE GENOMIC DNA]</scope>
    <source>
        <strain>K12 / DH10B</strain>
    </source>
</reference>
<protein>
    <recommendedName>
        <fullName evidence="1">Malate dehydrogenase</fullName>
        <ecNumber evidence="1">1.1.1.37</ecNumber>
    </recommendedName>
</protein>
<feature type="chain" id="PRO_1000191584" description="Malate dehydrogenase">
    <location>
        <begin position="1"/>
        <end position="312"/>
    </location>
</feature>
<feature type="active site" description="Proton acceptor" evidence="1">
    <location>
        <position position="177"/>
    </location>
</feature>
<feature type="binding site" evidence="1">
    <location>
        <begin position="7"/>
        <end position="13"/>
    </location>
    <ligand>
        <name>NAD(+)</name>
        <dbReference type="ChEBI" id="CHEBI:57540"/>
    </ligand>
</feature>
<feature type="binding site" evidence="1">
    <location>
        <position position="34"/>
    </location>
    <ligand>
        <name>NAD(+)</name>
        <dbReference type="ChEBI" id="CHEBI:57540"/>
    </ligand>
</feature>
<feature type="binding site" evidence="1">
    <location>
        <position position="81"/>
    </location>
    <ligand>
        <name>substrate</name>
    </ligand>
</feature>
<feature type="binding site" evidence="1">
    <location>
        <position position="87"/>
    </location>
    <ligand>
        <name>substrate</name>
    </ligand>
</feature>
<feature type="binding site" evidence="1">
    <location>
        <position position="94"/>
    </location>
    <ligand>
        <name>NAD(+)</name>
        <dbReference type="ChEBI" id="CHEBI:57540"/>
    </ligand>
</feature>
<feature type="binding site" evidence="1">
    <location>
        <begin position="117"/>
        <end position="119"/>
    </location>
    <ligand>
        <name>NAD(+)</name>
        <dbReference type="ChEBI" id="CHEBI:57540"/>
    </ligand>
</feature>
<feature type="binding site" evidence="1">
    <location>
        <position position="119"/>
    </location>
    <ligand>
        <name>substrate</name>
    </ligand>
</feature>
<feature type="binding site" evidence="1">
    <location>
        <position position="153"/>
    </location>
    <ligand>
        <name>substrate</name>
    </ligand>
</feature>
<feature type="binding site" evidence="1">
    <location>
        <position position="227"/>
    </location>
    <ligand>
        <name>NAD(+)</name>
        <dbReference type="ChEBI" id="CHEBI:57540"/>
    </ligand>
</feature>
<accession>B1XHK9</accession>
<dbReference type="EC" id="1.1.1.37" evidence="1"/>
<dbReference type="EMBL" id="CP000948">
    <property type="protein sequence ID" value="ACB04310.1"/>
    <property type="molecule type" value="Genomic_DNA"/>
</dbReference>
<dbReference type="RefSeq" id="WP_001295272.1">
    <property type="nucleotide sequence ID" value="NC_010473.1"/>
</dbReference>
<dbReference type="SMR" id="B1XHK9"/>
<dbReference type="GeneID" id="93778749"/>
<dbReference type="KEGG" id="ecd:ECDH10B_3413"/>
<dbReference type="HOGENOM" id="CLU_047181_0_1_6"/>
<dbReference type="GO" id="GO:0005737">
    <property type="term" value="C:cytoplasm"/>
    <property type="evidence" value="ECO:0007669"/>
    <property type="project" value="TreeGrafter"/>
</dbReference>
<dbReference type="GO" id="GO:0030060">
    <property type="term" value="F:L-malate dehydrogenase (NAD+) activity"/>
    <property type="evidence" value="ECO:0007669"/>
    <property type="project" value="UniProtKB-UniRule"/>
</dbReference>
<dbReference type="GO" id="GO:0006108">
    <property type="term" value="P:malate metabolic process"/>
    <property type="evidence" value="ECO:0007669"/>
    <property type="project" value="InterPro"/>
</dbReference>
<dbReference type="GO" id="GO:0006099">
    <property type="term" value="P:tricarboxylic acid cycle"/>
    <property type="evidence" value="ECO:0007669"/>
    <property type="project" value="UniProtKB-UniRule"/>
</dbReference>
<dbReference type="CDD" id="cd01337">
    <property type="entry name" value="MDH_glyoxysomal_mitochondrial"/>
    <property type="match status" value="1"/>
</dbReference>
<dbReference type="FunFam" id="3.40.50.720:FF:000017">
    <property type="entry name" value="Malate dehydrogenase"/>
    <property type="match status" value="1"/>
</dbReference>
<dbReference type="FunFam" id="3.90.110.10:FF:000001">
    <property type="entry name" value="Malate dehydrogenase"/>
    <property type="match status" value="1"/>
</dbReference>
<dbReference type="Gene3D" id="3.90.110.10">
    <property type="entry name" value="Lactate dehydrogenase/glycoside hydrolase, family 4, C-terminal"/>
    <property type="match status" value="1"/>
</dbReference>
<dbReference type="Gene3D" id="3.40.50.720">
    <property type="entry name" value="NAD(P)-binding Rossmann-like Domain"/>
    <property type="match status" value="1"/>
</dbReference>
<dbReference type="HAMAP" id="MF_01516">
    <property type="entry name" value="Malate_dehydrog_1"/>
    <property type="match status" value="1"/>
</dbReference>
<dbReference type="InterPro" id="IPR001557">
    <property type="entry name" value="L-lactate/malate_DH"/>
</dbReference>
<dbReference type="InterPro" id="IPR022383">
    <property type="entry name" value="Lactate/malate_DH_C"/>
</dbReference>
<dbReference type="InterPro" id="IPR001236">
    <property type="entry name" value="Lactate/malate_DH_N"/>
</dbReference>
<dbReference type="InterPro" id="IPR015955">
    <property type="entry name" value="Lactate_DH/Glyco_Ohase_4_C"/>
</dbReference>
<dbReference type="InterPro" id="IPR001252">
    <property type="entry name" value="Malate_DH_AS"/>
</dbReference>
<dbReference type="InterPro" id="IPR010097">
    <property type="entry name" value="Malate_DH_type1"/>
</dbReference>
<dbReference type="InterPro" id="IPR023958">
    <property type="entry name" value="Malate_DH_type1_bac"/>
</dbReference>
<dbReference type="InterPro" id="IPR036291">
    <property type="entry name" value="NAD(P)-bd_dom_sf"/>
</dbReference>
<dbReference type="NCBIfam" id="TIGR01772">
    <property type="entry name" value="MDH_euk_gproteo"/>
    <property type="match status" value="1"/>
</dbReference>
<dbReference type="PANTHER" id="PTHR11540">
    <property type="entry name" value="MALATE AND LACTATE DEHYDROGENASE"/>
    <property type="match status" value="1"/>
</dbReference>
<dbReference type="PANTHER" id="PTHR11540:SF16">
    <property type="entry name" value="MALATE DEHYDROGENASE, MITOCHONDRIAL"/>
    <property type="match status" value="1"/>
</dbReference>
<dbReference type="Pfam" id="PF02866">
    <property type="entry name" value="Ldh_1_C"/>
    <property type="match status" value="1"/>
</dbReference>
<dbReference type="Pfam" id="PF00056">
    <property type="entry name" value="Ldh_1_N"/>
    <property type="match status" value="1"/>
</dbReference>
<dbReference type="PIRSF" id="PIRSF000102">
    <property type="entry name" value="Lac_mal_DH"/>
    <property type="match status" value="1"/>
</dbReference>
<dbReference type="SUPFAM" id="SSF56327">
    <property type="entry name" value="LDH C-terminal domain-like"/>
    <property type="match status" value="1"/>
</dbReference>
<dbReference type="SUPFAM" id="SSF51735">
    <property type="entry name" value="NAD(P)-binding Rossmann-fold domains"/>
    <property type="match status" value="1"/>
</dbReference>
<dbReference type="PROSITE" id="PS00068">
    <property type="entry name" value="MDH"/>
    <property type="match status" value="1"/>
</dbReference>
<name>MDH_ECODH</name>
<evidence type="ECO:0000255" key="1">
    <source>
        <dbReference type="HAMAP-Rule" id="MF_01516"/>
    </source>
</evidence>